<sequence>MTEPNRAQAAPASPTAELPAADENKIIAERREKLAALRRQGVAFPNDFRPTHQAAALHEQYGETDQPALEATPVEVAIAGRMMLKRVMGKASFATVQDGSGQIQFYITRDKVGEDVYAAFKHWDLGDIISARGVLFRTNKGELSVQVQELRLLSKSLRPLPDKFHGLADQEMKYRQRYVDLIVSPETRNTFRARTKAMSSLRRHMSDAGFMEVETPMLHPIPGGAAAKPFITHHNALDMQMFMRIAPELYLKRLIVGGFERVFEINRNFRNEGVSPRHNPEFTMMEFYAAYTDYRWLMDFTENLIRQAAIDASGTAVLTYQGRELDLSKPFHRLTICQAIQKFAPQYTDAQLADADFLRTELKKFGVNTSAPQFLNAGIGTLQLVLFEETAESQLWEPTFIVDYPVEVSPLARASDTVPGITERFELFITGREIANGFSELNDAEDQADRFRKQVEQKDAGDEEAMYYDADYIRALEYGMPPTGGCGIGIDRLVMLLTDSPNIRDVILFPHLRRED</sequence>
<feature type="chain" id="PRO_1000012918" description="Lysine--tRNA ligase">
    <location>
        <begin position="1"/>
        <end position="516"/>
    </location>
</feature>
<feature type="region of interest" description="Disordered" evidence="2">
    <location>
        <begin position="1"/>
        <end position="23"/>
    </location>
</feature>
<feature type="binding site" evidence="1">
    <location>
        <position position="426"/>
    </location>
    <ligand>
        <name>Mg(2+)</name>
        <dbReference type="ChEBI" id="CHEBI:18420"/>
        <label>1</label>
    </ligand>
</feature>
<feature type="binding site" evidence="1">
    <location>
        <position position="433"/>
    </location>
    <ligand>
        <name>Mg(2+)</name>
        <dbReference type="ChEBI" id="CHEBI:18420"/>
        <label>1</label>
    </ligand>
</feature>
<feature type="binding site" evidence="1">
    <location>
        <position position="433"/>
    </location>
    <ligand>
        <name>Mg(2+)</name>
        <dbReference type="ChEBI" id="CHEBI:18420"/>
        <label>2</label>
    </ligand>
</feature>
<reference key="1">
    <citation type="journal article" date="2010" name="PLoS ONE">
        <title>The complete multipartite genome sequence of Cupriavidus necator JMP134, a versatile pollutant degrader.</title>
        <authorList>
            <person name="Lykidis A."/>
            <person name="Perez-Pantoja D."/>
            <person name="Ledger T."/>
            <person name="Mavromatis K."/>
            <person name="Anderson I.J."/>
            <person name="Ivanova N.N."/>
            <person name="Hooper S.D."/>
            <person name="Lapidus A."/>
            <person name="Lucas S."/>
            <person name="Gonzalez B."/>
            <person name="Kyrpides N.C."/>
        </authorList>
    </citation>
    <scope>NUCLEOTIDE SEQUENCE [LARGE SCALE GENOMIC DNA]</scope>
    <source>
        <strain>JMP134 / LMG 1197</strain>
    </source>
</reference>
<gene>
    <name evidence="1" type="primary">lysS</name>
    <name type="ordered locus">Reut_A1070</name>
</gene>
<accession>Q473I5</accession>
<proteinExistence type="inferred from homology"/>
<dbReference type="EC" id="6.1.1.6" evidence="1"/>
<dbReference type="EMBL" id="CP000090">
    <property type="protein sequence ID" value="AAZ60448.1"/>
    <property type="molecule type" value="Genomic_DNA"/>
</dbReference>
<dbReference type="SMR" id="Q473I5"/>
<dbReference type="STRING" id="264198.Reut_A1070"/>
<dbReference type="KEGG" id="reu:Reut_A1070"/>
<dbReference type="eggNOG" id="COG1190">
    <property type="taxonomic scope" value="Bacteria"/>
</dbReference>
<dbReference type="HOGENOM" id="CLU_008255_6_0_4"/>
<dbReference type="OrthoDB" id="9801152at2"/>
<dbReference type="GO" id="GO:0005829">
    <property type="term" value="C:cytosol"/>
    <property type="evidence" value="ECO:0007669"/>
    <property type="project" value="TreeGrafter"/>
</dbReference>
<dbReference type="GO" id="GO:0005524">
    <property type="term" value="F:ATP binding"/>
    <property type="evidence" value="ECO:0007669"/>
    <property type="project" value="UniProtKB-UniRule"/>
</dbReference>
<dbReference type="GO" id="GO:0004824">
    <property type="term" value="F:lysine-tRNA ligase activity"/>
    <property type="evidence" value="ECO:0007669"/>
    <property type="project" value="UniProtKB-UniRule"/>
</dbReference>
<dbReference type="GO" id="GO:0000287">
    <property type="term" value="F:magnesium ion binding"/>
    <property type="evidence" value="ECO:0007669"/>
    <property type="project" value="UniProtKB-UniRule"/>
</dbReference>
<dbReference type="GO" id="GO:0000049">
    <property type="term" value="F:tRNA binding"/>
    <property type="evidence" value="ECO:0007669"/>
    <property type="project" value="TreeGrafter"/>
</dbReference>
<dbReference type="GO" id="GO:0006430">
    <property type="term" value="P:lysyl-tRNA aminoacylation"/>
    <property type="evidence" value="ECO:0007669"/>
    <property type="project" value="UniProtKB-UniRule"/>
</dbReference>
<dbReference type="CDD" id="cd00775">
    <property type="entry name" value="LysRS_core"/>
    <property type="match status" value="1"/>
</dbReference>
<dbReference type="CDD" id="cd04322">
    <property type="entry name" value="LysRS_N"/>
    <property type="match status" value="1"/>
</dbReference>
<dbReference type="FunFam" id="2.40.50.140:FF:000024">
    <property type="entry name" value="Lysine--tRNA ligase"/>
    <property type="match status" value="1"/>
</dbReference>
<dbReference type="FunFam" id="3.30.930.10:FF:000001">
    <property type="entry name" value="Lysine--tRNA ligase"/>
    <property type="match status" value="1"/>
</dbReference>
<dbReference type="Gene3D" id="3.30.930.10">
    <property type="entry name" value="Bira Bifunctional Protein, Domain 2"/>
    <property type="match status" value="1"/>
</dbReference>
<dbReference type="Gene3D" id="2.40.50.140">
    <property type="entry name" value="Nucleic acid-binding proteins"/>
    <property type="match status" value="1"/>
</dbReference>
<dbReference type="HAMAP" id="MF_00252">
    <property type="entry name" value="Lys_tRNA_synth_class2"/>
    <property type="match status" value="1"/>
</dbReference>
<dbReference type="InterPro" id="IPR004364">
    <property type="entry name" value="Aa-tRNA-synt_II"/>
</dbReference>
<dbReference type="InterPro" id="IPR006195">
    <property type="entry name" value="aa-tRNA-synth_II"/>
</dbReference>
<dbReference type="InterPro" id="IPR045864">
    <property type="entry name" value="aa-tRNA-synth_II/BPL/LPL"/>
</dbReference>
<dbReference type="InterPro" id="IPR002313">
    <property type="entry name" value="Lys-tRNA-ligase_II"/>
</dbReference>
<dbReference type="InterPro" id="IPR044136">
    <property type="entry name" value="Lys-tRNA-ligase_II_N"/>
</dbReference>
<dbReference type="InterPro" id="IPR018149">
    <property type="entry name" value="Lys-tRNA-synth_II_C"/>
</dbReference>
<dbReference type="InterPro" id="IPR012340">
    <property type="entry name" value="NA-bd_OB-fold"/>
</dbReference>
<dbReference type="InterPro" id="IPR004365">
    <property type="entry name" value="NA-bd_OB_tRNA"/>
</dbReference>
<dbReference type="NCBIfam" id="TIGR00499">
    <property type="entry name" value="lysS_bact"/>
    <property type="match status" value="1"/>
</dbReference>
<dbReference type="NCBIfam" id="NF001756">
    <property type="entry name" value="PRK00484.1"/>
    <property type="match status" value="1"/>
</dbReference>
<dbReference type="PANTHER" id="PTHR42918:SF15">
    <property type="entry name" value="LYSINE--TRNA LIGASE, CHLOROPLASTIC_MITOCHONDRIAL"/>
    <property type="match status" value="1"/>
</dbReference>
<dbReference type="PANTHER" id="PTHR42918">
    <property type="entry name" value="LYSYL-TRNA SYNTHETASE"/>
    <property type="match status" value="1"/>
</dbReference>
<dbReference type="Pfam" id="PF00152">
    <property type="entry name" value="tRNA-synt_2"/>
    <property type="match status" value="1"/>
</dbReference>
<dbReference type="Pfam" id="PF01336">
    <property type="entry name" value="tRNA_anti-codon"/>
    <property type="match status" value="1"/>
</dbReference>
<dbReference type="PRINTS" id="PR00982">
    <property type="entry name" value="TRNASYNTHLYS"/>
</dbReference>
<dbReference type="SUPFAM" id="SSF55681">
    <property type="entry name" value="Class II aaRS and biotin synthetases"/>
    <property type="match status" value="1"/>
</dbReference>
<dbReference type="SUPFAM" id="SSF50249">
    <property type="entry name" value="Nucleic acid-binding proteins"/>
    <property type="match status" value="1"/>
</dbReference>
<dbReference type="PROSITE" id="PS50862">
    <property type="entry name" value="AA_TRNA_LIGASE_II"/>
    <property type="match status" value="1"/>
</dbReference>
<comment type="catalytic activity">
    <reaction evidence="1">
        <text>tRNA(Lys) + L-lysine + ATP = L-lysyl-tRNA(Lys) + AMP + diphosphate</text>
        <dbReference type="Rhea" id="RHEA:20792"/>
        <dbReference type="Rhea" id="RHEA-COMP:9696"/>
        <dbReference type="Rhea" id="RHEA-COMP:9697"/>
        <dbReference type="ChEBI" id="CHEBI:30616"/>
        <dbReference type="ChEBI" id="CHEBI:32551"/>
        <dbReference type="ChEBI" id="CHEBI:33019"/>
        <dbReference type="ChEBI" id="CHEBI:78442"/>
        <dbReference type="ChEBI" id="CHEBI:78529"/>
        <dbReference type="ChEBI" id="CHEBI:456215"/>
        <dbReference type="EC" id="6.1.1.6"/>
    </reaction>
</comment>
<comment type="cofactor">
    <cofactor evidence="1">
        <name>Mg(2+)</name>
        <dbReference type="ChEBI" id="CHEBI:18420"/>
    </cofactor>
    <text evidence="1">Binds 3 Mg(2+) ions per subunit.</text>
</comment>
<comment type="subunit">
    <text evidence="1">Homodimer.</text>
</comment>
<comment type="subcellular location">
    <subcellularLocation>
        <location evidence="1">Cytoplasm</location>
    </subcellularLocation>
</comment>
<comment type="similarity">
    <text evidence="1">Belongs to the class-II aminoacyl-tRNA synthetase family.</text>
</comment>
<name>SYK_CUPPJ</name>
<evidence type="ECO:0000255" key="1">
    <source>
        <dbReference type="HAMAP-Rule" id="MF_00252"/>
    </source>
</evidence>
<evidence type="ECO:0000256" key="2">
    <source>
        <dbReference type="SAM" id="MobiDB-lite"/>
    </source>
</evidence>
<protein>
    <recommendedName>
        <fullName evidence="1">Lysine--tRNA ligase</fullName>
        <ecNumber evidence="1">6.1.1.6</ecNumber>
    </recommendedName>
    <alternativeName>
        <fullName evidence="1">Lysyl-tRNA synthetase</fullName>
        <shortName evidence="1">LysRS</shortName>
    </alternativeName>
</protein>
<organism>
    <name type="scientific">Cupriavidus pinatubonensis (strain JMP 134 / LMG 1197)</name>
    <name type="common">Cupriavidus necator (strain JMP 134)</name>
    <dbReference type="NCBI Taxonomy" id="264198"/>
    <lineage>
        <taxon>Bacteria</taxon>
        <taxon>Pseudomonadati</taxon>
        <taxon>Pseudomonadota</taxon>
        <taxon>Betaproteobacteria</taxon>
        <taxon>Burkholderiales</taxon>
        <taxon>Burkholderiaceae</taxon>
        <taxon>Cupriavidus</taxon>
    </lineage>
</organism>
<keyword id="KW-0030">Aminoacyl-tRNA synthetase</keyword>
<keyword id="KW-0067">ATP-binding</keyword>
<keyword id="KW-0963">Cytoplasm</keyword>
<keyword id="KW-0436">Ligase</keyword>
<keyword id="KW-0460">Magnesium</keyword>
<keyword id="KW-0479">Metal-binding</keyword>
<keyword id="KW-0547">Nucleotide-binding</keyword>
<keyword id="KW-0648">Protein biosynthesis</keyword>